<gene>
    <name evidence="1" type="primary">ecfT</name>
    <name type="ordered locus">LEGAS_1699</name>
</gene>
<comment type="function">
    <text evidence="1">Transmembrane (T) component of an energy-coupling factor (ECF) ABC-transporter complex. Unlike classic ABC transporters this ECF transporter provides the energy necessary to transport a number of different substrates.</text>
</comment>
<comment type="subunit">
    <text evidence="1">Forms a stable energy-coupling factor (ECF) transporter complex composed of 2 membrane-embedded substrate-binding proteins (S component), 2 ATP-binding proteins (A component) and 2 transmembrane proteins (T component). May be able to interact with more than 1 S component at a time (By similarity).</text>
</comment>
<comment type="subcellular location">
    <subcellularLocation>
        <location evidence="1">Cell membrane</location>
        <topology evidence="1">Multi-pass membrane protein</topology>
    </subcellularLocation>
</comment>
<comment type="similarity">
    <text evidence="1">Belongs to the energy-coupling factor EcfT family.</text>
</comment>
<keyword id="KW-1003">Cell membrane</keyword>
<keyword id="KW-0472">Membrane</keyword>
<keyword id="KW-0812">Transmembrane</keyword>
<keyword id="KW-1133">Transmembrane helix</keyword>
<keyword id="KW-0813">Transport</keyword>
<dbReference type="EMBL" id="FN822744">
    <property type="protein sequence ID" value="CBL92347.1"/>
    <property type="molecule type" value="Genomic_DNA"/>
</dbReference>
<dbReference type="RefSeq" id="WP_013231984.1">
    <property type="nucleotide sequence ID" value="NC_014319.1"/>
</dbReference>
<dbReference type="SMR" id="D8MHM9"/>
<dbReference type="GeneID" id="34301959"/>
<dbReference type="KEGG" id="lgs:LEGAS_1699"/>
<dbReference type="HOGENOM" id="CLU_056469_2_2_9"/>
<dbReference type="GO" id="GO:0005886">
    <property type="term" value="C:plasma membrane"/>
    <property type="evidence" value="ECO:0007669"/>
    <property type="project" value="UniProtKB-SubCell"/>
</dbReference>
<dbReference type="GO" id="GO:0022857">
    <property type="term" value="F:transmembrane transporter activity"/>
    <property type="evidence" value="ECO:0007669"/>
    <property type="project" value="UniProtKB-UniRule"/>
</dbReference>
<dbReference type="CDD" id="cd16914">
    <property type="entry name" value="EcfT"/>
    <property type="match status" value="1"/>
</dbReference>
<dbReference type="HAMAP" id="MF_01461">
    <property type="entry name" value="EcfT"/>
    <property type="match status" value="1"/>
</dbReference>
<dbReference type="InterPro" id="IPR003339">
    <property type="entry name" value="ABC/ECF_trnsptr_transmembrane"/>
</dbReference>
<dbReference type="InterPro" id="IPR024919">
    <property type="entry name" value="EcfT"/>
</dbReference>
<dbReference type="PANTHER" id="PTHR33514">
    <property type="entry name" value="PROTEIN ABCI12, CHLOROPLASTIC"/>
    <property type="match status" value="1"/>
</dbReference>
<dbReference type="PANTHER" id="PTHR33514:SF13">
    <property type="entry name" value="PROTEIN ABCI12, CHLOROPLASTIC"/>
    <property type="match status" value="1"/>
</dbReference>
<dbReference type="Pfam" id="PF02361">
    <property type="entry name" value="CbiQ"/>
    <property type="match status" value="1"/>
</dbReference>
<sequence>MNNIMIGRFVPGNSWIHRLDPRTKMIVTFVYIIVMLWASNWQTYAWTAAFVVAMVKLTDQPFKLYWDGLKPIFWLILFTVILQLLFTPGTPILFSVGPFQVTVPGILNAIYVMVRFVLIILMSTILTLTTPPTSIANALESLLSPLKKIGVPVAELALMLAIALRFVPLLMDEMQKIMNAQKSRGMSFSTGGPIKRAKAIIPLLIPLFIGALQRALDLANAMEVRGFKDAVQRTKYRILSYQKIDKVAFAALIGFVIIFFVIKTWLHG</sequence>
<organism>
    <name type="scientific">Leuconostoc gelidum subsp. gasicomitatum (strain DSM 15947 / CCUG 46042 / CECT 5767 / JCM 12535 / LMG 18811 / NBRC 113245 / TB1-10)</name>
    <name type="common">Leuconostoc gasicomitatum</name>
    <dbReference type="NCBI Taxonomy" id="762550"/>
    <lineage>
        <taxon>Bacteria</taxon>
        <taxon>Bacillati</taxon>
        <taxon>Bacillota</taxon>
        <taxon>Bacilli</taxon>
        <taxon>Lactobacillales</taxon>
        <taxon>Lactobacillaceae</taxon>
        <taxon>Leuconostoc</taxon>
        <taxon>Leuconostoc gelidum group</taxon>
    </lineage>
</organism>
<name>ECFT_LEUGG</name>
<reference key="1">
    <citation type="submission" date="2010-04" db="EMBL/GenBank/DDBJ databases">
        <title>Genome sequence and comparative genomics of a food spoilage lactic acid bacterium Leuconostoc gasicomitatum 18811T.</title>
        <authorList>
            <person name="Johansson P."/>
            <person name="Paulin L."/>
            <person name="Vihavainen E.J."/>
            <person name="Salovuori N."/>
            <person name="Alatalo E.R."/>
            <person name="Bjoerkroth J.K."/>
            <person name="Auvinen P."/>
        </authorList>
    </citation>
    <scope>NUCLEOTIDE SEQUENCE [LARGE SCALE GENOMIC DNA]</scope>
    <source>
        <strain>DSM 15947 / CCUG 46042 / CECT 5767 / JCM 12535 / LMG 18811 / NBRC 113245 / TB1-10</strain>
    </source>
</reference>
<accession>D8MHM9</accession>
<proteinExistence type="inferred from homology"/>
<protein>
    <recommendedName>
        <fullName evidence="1">Energy-coupling factor transporter transmembrane protein EcfT</fullName>
        <shortName evidence="1">ECF transporter T component EcfT</shortName>
    </recommendedName>
</protein>
<evidence type="ECO:0000255" key="1">
    <source>
        <dbReference type="HAMAP-Rule" id="MF_01461"/>
    </source>
</evidence>
<feature type="chain" id="PRO_0000408995" description="Energy-coupling factor transporter transmembrane protein EcfT">
    <location>
        <begin position="1"/>
        <end position="268"/>
    </location>
</feature>
<feature type="transmembrane region" description="Helical" evidence="1">
    <location>
        <begin position="26"/>
        <end position="46"/>
    </location>
</feature>
<feature type="transmembrane region" description="Helical" evidence="1">
    <location>
        <begin position="72"/>
        <end position="92"/>
    </location>
</feature>
<feature type="transmembrane region" description="Helical" evidence="1">
    <location>
        <begin position="106"/>
        <end position="126"/>
    </location>
</feature>
<feature type="transmembrane region" description="Helical" evidence="1">
    <location>
        <begin position="149"/>
        <end position="169"/>
    </location>
</feature>
<feature type="transmembrane region" description="Helical" evidence="1">
    <location>
        <begin position="247"/>
        <end position="267"/>
    </location>
</feature>